<dbReference type="EMBL" id="BA000049">
    <property type="protein sequence ID" value="BAE56239.1"/>
    <property type="molecule type" value="Genomic_DNA"/>
</dbReference>
<dbReference type="RefSeq" id="XP_001818241.1">
    <property type="nucleotide sequence ID" value="XM_001818189.3"/>
</dbReference>
<dbReference type="SMR" id="Q2UQC6"/>
<dbReference type="STRING" id="510516.Q2UQC6"/>
<dbReference type="EnsemblFungi" id="BAE56239">
    <property type="protein sequence ID" value="BAE56239"/>
    <property type="gene ID" value="AO090005001305"/>
</dbReference>
<dbReference type="GeneID" id="5990186"/>
<dbReference type="KEGG" id="aor:AO090005001305"/>
<dbReference type="VEuPathDB" id="FungiDB:AO090005001305"/>
<dbReference type="HOGENOM" id="CLU_076723_0_1_1"/>
<dbReference type="OMA" id="GDDLCAD"/>
<dbReference type="OrthoDB" id="70271at5052"/>
<dbReference type="Proteomes" id="UP000006564">
    <property type="component" value="Chromosome 1"/>
</dbReference>
<dbReference type="GO" id="GO:0016282">
    <property type="term" value="C:eukaryotic 43S preinitiation complex"/>
    <property type="evidence" value="ECO:0007669"/>
    <property type="project" value="UniProtKB-UniRule"/>
</dbReference>
<dbReference type="GO" id="GO:0033290">
    <property type="term" value="C:eukaryotic 48S preinitiation complex"/>
    <property type="evidence" value="ECO:0007669"/>
    <property type="project" value="UniProtKB-UniRule"/>
</dbReference>
<dbReference type="GO" id="GO:0005852">
    <property type="term" value="C:eukaryotic translation initiation factor 3 complex"/>
    <property type="evidence" value="ECO:0007669"/>
    <property type="project" value="UniProtKB-UniRule"/>
</dbReference>
<dbReference type="GO" id="GO:0043022">
    <property type="term" value="F:ribosome binding"/>
    <property type="evidence" value="ECO:0007669"/>
    <property type="project" value="InterPro"/>
</dbReference>
<dbReference type="GO" id="GO:0003723">
    <property type="term" value="F:RNA binding"/>
    <property type="evidence" value="ECO:0007669"/>
    <property type="project" value="UniProtKB-UniRule"/>
</dbReference>
<dbReference type="GO" id="GO:0003743">
    <property type="term" value="F:translation initiation factor activity"/>
    <property type="evidence" value="ECO:0007669"/>
    <property type="project" value="UniProtKB-UniRule"/>
</dbReference>
<dbReference type="GO" id="GO:0001732">
    <property type="term" value="P:formation of cytoplasmic translation initiation complex"/>
    <property type="evidence" value="ECO:0007669"/>
    <property type="project" value="UniProtKB-UniRule"/>
</dbReference>
<dbReference type="GO" id="GO:0006446">
    <property type="term" value="P:regulation of translational initiation"/>
    <property type="evidence" value="ECO:0007669"/>
    <property type="project" value="InterPro"/>
</dbReference>
<dbReference type="FunFam" id="1.10.10.10:FF:000389">
    <property type="entry name" value="Eukaryotic translation initiation factor 3 subunit K"/>
    <property type="match status" value="1"/>
</dbReference>
<dbReference type="FunFam" id="1.25.40.250:FF:000003">
    <property type="entry name" value="Eukaryotic translation initiation factor 3 subunit K"/>
    <property type="match status" value="1"/>
</dbReference>
<dbReference type="Gene3D" id="1.25.40.250">
    <property type="entry name" value="ARM repeat, domain 1"/>
    <property type="match status" value="1"/>
</dbReference>
<dbReference type="Gene3D" id="1.10.10.10">
    <property type="entry name" value="Winged helix-like DNA-binding domain superfamily/Winged helix DNA-binding domain"/>
    <property type="match status" value="1"/>
</dbReference>
<dbReference type="HAMAP" id="MF_03010">
    <property type="entry name" value="eIF3k"/>
    <property type="match status" value="1"/>
</dbReference>
<dbReference type="InterPro" id="IPR016024">
    <property type="entry name" value="ARM-type_fold"/>
</dbReference>
<dbReference type="InterPro" id="IPR033464">
    <property type="entry name" value="CSN8_PSD8_EIF3K"/>
</dbReference>
<dbReference type="InterPro" id="IPR009374">
    <property type="entry name" value="eIF3k"/>
</dbReference>
<dbReference type="InterPro" id="IPR000717">
    <property type="entry name" value="PCI_dom"/>
</dbReference>
<dbReference type="InterPro" id="IPR016020">
    <property type="entry name" value="Transl_init_fac_sub12_N_euk"/>
</dbReference>
<dbReference type="InterPro" id="IPR036388">
    <property type="entry name" value="WH-like_DNA-bd_sf"/>
</dbReference>
<dbReference type="InterPro" id="IPR036390">
    <property type="entry name" value="WH_DNA-bd_sf"/>
</dbReference>
<dbReference type="PANTHER" id="PTHR13022">
    <property type="entry name" value="EUKARYOTIC TRANSLATION INITIATION FACTOR 3 SUBUNIT 11"/>
    <property type="match status" value="1"/>
</dbReference>
<dbReference type="PANTHER" id="PTHR13022:SF0">
    <property type="entry name" value="EUKARYOTIC TRANSLATION INITIATION FACTOR 3 SUBUNIT K"/>
    <property type="match status" value="1"/>
</dbReference>
<dbReference type="Pfam" id="PF10075">
    <property type="entry name" value="CSN8_PSD8_EIF3K"/>
    <property type="match status" value="1"/>
</dbReference>
<dbReference type="SUPFAM" id="SSF48371">
    <property type="entry name" value="ARM repeat"/>
    <property type="match status" value="1"/>
</dbReference>
<dbReference type="SUPFAM" id="SSF46785">
    <property type="entry name" value="Winged helix' DNA-binding domain"/>
    <property type="match status" value="1"/>
</dbReference>
<dbReference type="PROSITE" id="PS50250">
    <property type="entry name" value="PCI"/>
    <property type="match status" value="1"/>
</dbReference>
<keyword id="KW-0963">Cytoplasm</keyword>
<keyword id="KW-0396">Initiation factor</keyword>
<keyword id="KW-0648">Protein biosynthesis</keyword>
<keyword id="KW-1185">Reference proteome</keyword>
<reference key="1">
    <citation type="journal article" date="2005" name="Nature">
        <title>Genome sequencing and analysis of Aspergillus oryzae.</title>
        <authorList>
            <person name="Machida M."/>
            <person name="Asai K."/>
            <person name="Sano M."/>
            <person name="Tanaka T."/>
            <person name="Kumagai T."/>
            <person name="Terai G."/>
            <person name="Kusumoto K."/>
            <person name="Arima T."/>
            <person name="Akita O."/>
            <person name="Kashiwagi Y."/>
            <person name="Abe K."/>
            <person name="Gomi K."/>
            <person name="Horiuchi H."/>
            <person name="Kitamoto K."/>
            <person name="Kobayashi T."/>
            <person name="Takeuchi M."/>
            <person name="Denning D.W."/>
            <person name="Galagan J.E."/>
            <person name="Nierman W.C."/>
            <person name="Yu J."/>
            <person name="Archer D.B."/>
            <person name="Bennett J.W."/>
            <person name="Bhatnagar D."/>
            <person name="Cleveland T.E."/>
            <person name="Fedorova N.D."/>
            <person name="Gotoh O."/>
            <person name="Horikawa H."/>
            <person name="Hosoyama A."/>
            <person name="Ichinomiya M."/>
            <person name="Igarashi R."/>
            <person name="Iwashita K."/>
            <person name="Juvvadi P.R."/>
            <person name="Kato M."/>
            <person name="Kato Y."/>
            <person name="Kin T."/>
            <person name="Kokubun A."/>
            <person name="Maeda H."/>
            <person name="Maeyama N."/>
            <person name="Maruyama J."/>
            <person name="Nagasaki H."/>
            <person name="Nakajima T."/>
            <person name="Oda K."/>
            <person name="Okada K."/>
            <person name="Paulsen I."/>
            <person name="Sakamoto K."/>
            <person name="Sawano T."/>
            <person name="Takahashi M."/>
            <person name="Takase K."/>
            <person name="Terabayashi Y."/>
            <person name="Wortman J.R."/>
            <person name="Yamada O."/>
            <person name="Yamagata Y."/>
            <person name="Anazawa H."/>
            <person name="Hata Y."/>
            <person name="Koide Y."/>
            <person name="Komori T."/>
            <person name="Koyama Y."/>
            <person name="Minetoki T."/>
            <person name="Suharnan S."/>
            <person name="Tanaka A."/>
            <person name="Isono K."/>
            <person name="Kuhara S."/>
            <person name="Ogasawara N."/>
            <person name="Kikuchi H."/>
        </authorList>
    </citation>
    <scope>NUCLEOTIDE SEQUENCE [LARGE SCALE GENOMIC DNA]</scope>
    <source>
        <strain>ATCC 42149 / RIB 40</strain>
    </source>
</reference>
<name>EIF3K_ASPOR</name>
<proteinExistence type="inferred from homology"/>
<accession>Q2UQC6</accession>
<gene>
    <name type="ORF">AO090005001305</name>
</gene>
<feature type="chain" id="PRO_0000365055" description="Eukaryotic translation initiation factor 3 subunit K">
    <location>
        <begin position="1"/>
        <end position="251"/>
    </location>
</feature>
<feature type="domain" description="PCI" evidence="2">
    <location>
        <begin position="46"/>
        <end position="224"/>
    </location>
</feature>
<organism>
    <name type="scientific">Aspergillus oryzae (strain ATCC 42149 / RIB 40)</name>
    <name type="common">Yellow koji mold</name>
    <dbReference type="NCBI Taxonomy" id="510516"/>
    <lineage>
        <taxon>Eukaryota</taxon>
        <taxon>Fungi</taxon>
        <taxon>Dikarya</taxon>
        <taxon>Ascomycota</taxon>
        <taxon>Pezizomycotina</taxon>
        <taxon>Eurotiomycetes</taxon>
        <taxon>Eurotiomycetidae</taxon>
        <taxon>Eurotiales</taxon>
        <taxon>Aspergillaceae</taxon>
        <taxon>Aspergillus</taxon>
        <taxon>Aspergillus subgen. Circumdati</taxon>
    </lineage>
</organism>
<comment type="function">
    <text evidence="1">Component of the eukaryotic translation initiation factor 3 (eIF-3) complex, which is involved in protein synthesis of a specialized repertoire of mRNAs and, together with other initiation factors, stimulates binding of mRNA and methionyl-tRNAi to the 40S ribosome. The eIF-3 complex specifically targets and initiates translation of a subset of mRNAs involved in cell proliferation.</text>
</comment>
<comment type="subunit">
    <text evidence="1">Component of the eukaryotic translation initiation factor 3 (eIF-3) complex.</text>
</comment>
<comment type="subcellular location">
    <subcellularLocation>
        <location evidence="1">Cytoplasm</location>
    </subcellularLocation>
</comment>
<comment type="similarity">
    <text evidence="1">Belongs to the eIF-3 subunit K family.</text>
</comment>
<protein>
    <recommendedName>
        <fullName evidence="1">Eukaryotic translation initiation factor 3 subunit K</fullName>
        <shortName evidence="1">eIF3k</shortName>
    </recommendedName>
    <alternativeName>
        <fullName evidence="1">eIF-3 p25</fullName>
    </alternativeName>
</protein>
<evidence type="ECO:0000255" key="1">
    <source>
        <dbReference type="HAMAP-Rule" id="MF_03010"/>
    </source>
</evidence>
<evidence type="ECO:0000255" key="2">
    <source>
        <dbReference type="PROSITE-ProRule" id="PRU01185"/>
    </source>
</evidence>
<sequence length="251" mass="28082">MGVAFDKCETRPANIDAILSGLDRYNPETTTIFQDYVVQQCEDRTFDCYANLALLKLYQFNPHLLQAETVTNILAKALTVFPSPAFSLCLSLLPAHTQPFPSNTEAQAASQTSDFVESVQKLARLSTLLESAQYAQFWSTLNSDDLYADLTADVAGFEELVRIRIAVEVGKAFREINAEVLEQWLDLRSREALEKFVAEVCSWEVDKSGPNGTVVKVPTNKENEVRSEVKSERVGVEMFGRVIRRGFEQAA</sequence>